<proteinExistence type="inferred from homology"/>
<geneLocation type="mitochondrion"/>
<comment type="function">
    <text evidence="2">Component of the ubiquinol-cytochrome c reductase complex (complex III or cytochrome b-c1 complex) that is part of the mitochondrial respiratory chain. The b-c1 complex mediates electron transfer from ubiquinol to cytochrome c. Contributes to the generation of a proton gradient across the mitochondrial membrane that is then used for ATP synthesis.</text>
</comment>
<comment type="cofactor">
    <cofactor evidence="2">
        <name>heme b</name>
        <dbReference type="ChEBI" id="CHEBI:60344"/>
    </cofactor>
    <text evidence="2">Binds 2 heme b groups non-covalently.</text>
</comment>
<comment type="subunit">
    <text evidence="2">The cytochrome bc1 complex contains 11 subunits: 3 respiratory subunits (MT-CYB, CYC1 and UQCRFS1), 2 core proteins (UQCRC1 and UQCRC2) and 6 low-molecular weight proteins (UQCRH/QCR6, UQCRB/QCR7, UQCRQ/QCR8, UQCR10/QCR9, UQCR11/QCR10 and a cleavage product of UQCRFS1). This cytochrome bc1 complex then forms a dimer.</text>
</comment>
<comment type="subcellular location">
    <subcellularLocation>
        <location evidence="2">Mitochondrion inner membrane</location>
        <topology evidence="2">Multi-pass membrane protein</topology>
    </subcellularLocation>
</comment>
<comment type="miscellaneous">
    <text evidence="1">Heme 1 (or BL or b562) is low-potential and absorbs at about 562 nm, and heme 2 (or BH or b566) is high-potential and absorbs at about 566 nm.</text>
</comment>
<comment type="similarity">
    <text evidence="3 4">Belongs to the cytochrome b family.</text>
</comment>
<comment type="caution">
    <text evidence="2">The full-length protein contains only eight transmembrane helices, not nine as predicted by bioinformatics tools.</text>
</comment>
<accession>Q956Z6</accession>
<evidence type="ECO:0000250" key="1"/>
<evidence type="ECO:0000250" key="2">
    <source>
        <dbReference type="UniProtKB" id="P00157"/>
    </source>
</evidence>
<evidence type="ECO:0000255" key="3">
    <source>
        <dbReference type="PROSITE-ProRule" id="PRU00967"/>
    </source>
</evidence>
<evidence type="ECO:0000255" key="4">
    <source>
        <dbReference type="PROSITE-ProRule" id="PRU00968"/>
    </source>
</evidence>
<feature type="chain" id="PRO_0000254731" description="Cytochrome b">
    <location>
        <begin position="1"/>
        <end position="379"/>
    </location>
</feature>
<feature type="transmembrane region" description="Helical" evidence="2">
    <location>
        <begin position="33"/>
        <end position="53"/>
    </location>
</feature>
<feature type="transmembrane region" description="Helical" evidence="2">
    <location>
        <begin position="77"/>
        <end position="98"/>
    </location>
</feature>
<feature type="transmembrane region" description="Helical" evidence="2">
    <location>
        <begin position="113"/>
        <end position="133"/>
    </location>
</feature>
<feature type="transmembrane region" description="Helical" evidence="2">
    <location>
        <begin position="178"/>
        <end position="198"/>
    </location>
</feature>
<feature type="transmembrane region" description="Helical" evidence="2">
    <location>
        <begin position="226"/>
        <end position="246"/>
    </location>
</feature>
<feature type="transmembrane region" description="Helical" evidence="2">
    <location>
        <begin position="288"/>
        <end position="308"/>
    </location>
</feature>
<feature type="transmembrane region" description="Helical" evidence="2">
    <location>
        <begin position="320"/>
        <end position="340"/>
    </location>
</feature>
<feature type="transmembrane region" description="Helical" evidence="2">
    <location>
        <begin position="347"/>
        <end position="367"/>
    </location>
</feature>
<feature type="binding site" description="axial binding residue" evidence="2">
    <location>
        <position position="83"/>
    </location>
    <ligand>
        <name>heme b</name>
        <dbReference type="ChEBI" id="CHEBI:60344"/>
        <label>b562</label>
    </ligand>
    <ligandPart>
        <name>Fe</name>
        <dbReference type="ChEBI" id="CHEBI:18248"/>
    </ligandPart>
</feature>
<feature type="binding site" description="axial binding residue" evidence="2">
    <location>
        <position position="97"/>
    </location>
    <ligand>
        <name>heme b</name>
        <dbReference type="ChEBI" id="CHEBI:60344"/>
        <label>b566</label>
    </ligand>
    <ligandPart>
        <name>Fe</name>
        <dbReference type="ChEBI" id="CHEBI:18248"/>
    </ligandPart>
</feature>
<feature type="binding site" description="axial binding residue" evidence="2">
    <location>
        <position position="182"/>
    </location>
    <ligand>
        <name>heme b</name>
        <dbReference type="ChEBI" id="CHEBI:60344"/>
        <label>b562</label>
    </ligand>
    <ligandPart>
        <name>Fe</name>
        <dbReference type="ChEBI" id="CHEBI:18248"/>
    </ligandPart>
</feature>
<feature type="binding site" description="axial binding residue" evidence="2">
    <location>
        <position position="196"/>
    </location>
    <ligand>
        <name>heme b</name>
        <dbReference type="ChEBI" id="CHEBI:60344"/>
        <label>b566</label>
    </ligand>
    <ligandPart>
        <name>Fe</name>
        <dbReference type="ChEBI" id="CHEBI:18248"/>
    </ligandPart>
</feature>
<feature type="binding site" evidence="2">
    <location>
        <position position="201"/>
    </location>
    <ligand>
        <name>a ubiquinone</name>
        <dbReference type="ChEBI" id="CHEBI:16389"/>
    </ligand>
</feature>
<sequence length="379" mass="42780">MTNIRKSHPLMKIINSSFIDLPAPSNISSWWNFGSLLGICLGLQILTGLFLAMHYTSDTATAFNSVTHICRDVNYGWVLRYLHANGASMFFICLYLHVGRGLYYGSYMYTETWNIGVILLFAVMATAFMGYVLPWGQMSFWGATVITNLLSAIPYIGTDLVQWIWGGFSVDKATLTRFFAFHFLLPFIIAAMVMVHLLFLHETGSNNPTGIPSNADMIPFHPYYTIKDILGLLLMIMVLLTLVLFSPDLLGDPDNYMPANPLNTPPHIKPEWYFLFAYAILRSIPNKLGGVLALVLSILILIIIPLLHTSKQRSMTFRPLSQCLFWLLAADLFTLTWIGGQPVEHPYVIIGQLASILYFSIIIILMPLTSLMENHLLKW</sequence>
<gene>
    <name type="primary">MT-CYB</name>
    <name type="synonym">COB</name>
    <name type="synonym">CYTB</name>
    <name type="synonym">MTCYB</name>
</gene>
<name>CYB_MYORP</name>
<reference key="1">
    <citation type="journal article" date="2001" name="Mol. Phylogenet. Evol.">
        <title>Molecular systematics of bats of the genus Myotis (Vespertilionidae) suggests deterministic ecomorphological convergences.</title>
        <authorList>
            <person name="Ruedi M."/>
            <person name="Mayer F."/>
        </authorList>
    </citation>
    <scope>NUCLEOTIDE SEQUENCE [GENOMIC DNA]</scope>
    <source>
        <strain>Isolate MVZ AD119</strain>
    </source>
</reference>
<protein>
    <recommendedName>
        <fullName>Cytochrome b</fullName>
    </recommendedName>
    <alternativeName>
        <fullName>Complex III subunit 3</fullName>
    </alternativeName>
    <alternativeName>
        <fullName>Complex III subunit III</fullName>
    </alternativeName>
    <alternativeName>
        <fullName>Cytochrome b-c1 complex subunit 3</fullName>
    </alternativeName>
    <alternativeName>
        <fullName>Ubiquinol-cytochrome-c reductase complex cytochrome b subunit</fullName>
    </alternativeName>
</protein>
<keyword id="KW-0249">Electron transport</keyword>
<keyword id="KW-0349">Heme</keyword>
<keyword id="KW-0408">Iron</keyword>
<keyword id="KW-0472">Membrane</keyword>
<keyword id="KW-0479">Metal-binding</keyword>
<keyword id="KW-0496">Mitochondrion</keyword>
<keyword id="KW-0999">Mitochondrion inner membrane</keyword>
<keyword id="KW-0679">Respiratory chain</keyword>
<keyword id="KW-0812">Transmembrane</keyword>
<keyword id="KW-1133">Transmembrane helix</keyword>
<keyword id="KW-0813">Transport</keyword>
<keyword id="KW-0830">Ubiquinone</keyword>
<dbReference type="EMBL" id="AF376866">
    <property type="protein sequence ID" value="AAK57685.1"/>
    <property type="molecule type" value="Genomic_DNA"/>
</dbReference>
<dbReference type="SMR" id="Q956Z6"/>
<dbReference type="GO" id="GO:0005743">
    <property type="term" value="C:mitochondrial inner membrane"/>
    <property type="evidence" value="ECO:0007669"/>
    <property type="project" value="UniProtKB-SubCell"/>
</dbReference>
<dbReference type="GO" id="GO:0045275">
    <property type="term" value="C:respiratory chain complex III"/>
    <property type="evidence" value="ECO:0007669"/>
    <property type="project" value="InterPro"/>
</dbReference>
<dbReference type="GO" id="GO:0046872">
    <property type="term" value="F:metal ion binding"/>
    <property type="evidence" value="ECO:0007669"/>
    <property type="project" value="UniProtKB-KW"/>
</dbReference>
<dbReference type="GO" id="GO:0008121">
    <property type="term" value="F:ubiquinol-cytochrome-c reductase activity"/>
    <property type="evidence" value="ECO:0007669"/>
    <property type="project" value="InterPro"/>
</dbReference>
<dbReference type="GO" id="GO:0006122">
    <property type="term" value="P:mitochondrial electron transport, ubiquinol to cytochrome c"/>
    <property type="evidence" value="ECO:0007669"/>
    <property type="project" value="TreeGrafter"/>
</dbReference>
<dbReference type="CDD" id="cd00290">
    <property type="entry name" value="cytochrome_b_C"/>
    <property type="match status" value="1"/>
</dbReference>
<dbReference type="CDD" id="cd00284">
    <property type="entry name" value="Cytochrome_b_N"/>
    <property type="match status" value="1"/>
</dbReference>
<dbReference type="FunFam" id="1.20.810.10:FF:000002">
    <property type="entry name" value="Cytochrome b"/>
    <property type="match status" value="1"/>
</dbReference>
<dbReference type="Gene3D" id="1.20.810.10">
    <property type="entry name" value="Cytochrome Bc1 Complex, Chain C"/>
    <property type="match status" value="1"/>
</dbReference>
<dbReference type="InterPro" id="IPR005798">
    <property type="entry name" value="Cyt_b/b6_C"/>
</dbReference>
<dbReference type="InterPro" id="IPR036150">
    <property type="entry name" value="Cyt_b/b6_C_sf"/>
</dbReference>
<dbReference type="InterPro" id="IPR005797">
    <property type="entry name" value="Cyt_b/b6_N"/>
</dbReference>
<dbReference type="InterPro" id="IPR027387">
    <property type="entry name" value="Cytb/b6-like_sf"/>
</dbReference>
<dbReference type="InterPro" id="IPR030689">
    <property type="entry name" value="Cytochrome_b"/>
</dbReference>
<dbReference type="InterPro" id="IPR048260">
    <property type="entry name" value="Cytochrome_b_C_euk/bac"/>
</dbReference>
<dbReference type="InterPro" id="IPR048259">
    <property type="entry name" value="Cytochrome_b_N_euk/bac"/>
</dbReference>
<dbReference type="InterPro" id="IPR016174">
    <property type="entry name" value="Di-haem_cyt_TM"/>
</dbReference>
<dbReference type="PANTHER" id="PTHR19271">
    <property type="entry name" value="CYTOCHROME B"/>
    <property type="match status" value="1"/>
</dbReference>
<dbReference type="PANTHER" id="PTHR19271:SF16">
    <property type="entry name" value="CYTOCHROME B"/>
    <property type="match status" value="1"/>
</dbReference>
<dbReference type="Pfam" id="PF00032">
    <property type="entry name" value="Cytochrom_B_C"/>
    <property type="match status" value="1"/>
</dbReference>
<dbReference type="Pfam" id="PF00033">
    <property type="entry name" value="Cytochrome_B"/>
    <property type="match status" value="1"/>
</dbReference>
<dbReference type="PIRSF" id="PIRSF038885">
    <property type="entry name" value="COB"/>
    <property type="match status" value="1"/>
</dbReference>
<dbReference type="SUPFAM" id="SSF81648">
    <property type="entry name" value="a domain/subunit of cytochrome bc1 complex (Ubiquinol-cytochrome c reductase)"/>
    <property type="match status" value="1"/>
</dbReference>
<dbReference type="SUPFAM" id="SSF81342">
    <property type="entry name" value="Transmembrane di-heme cytochromes"/>
    <property type="match status" value="1"/>
</dbReference>
<dbReference type="PROSITE" id="PS51003">
    <property type="entry name" value="CYTB_CTER"/>
    <property type="match status" value="1"/>
</dbReference>
<dbReference type="PROSITE" id="PS51002">
    <property type="entry name" value="CYTB_NTER"/>
    <property type="match status" value="1"/>
</dbReference>
<organism>
    <name type="scientific">Myotis riparius</name>
    <name type="common">Riparian myotis</name>
    <dbReference type="NCBI Taxonomy" id="124752"/>
    <lineage>
        <taxon>Eukaryota</taxon>
        <taxon>Metazoa</taxon>
        <taxon>Chordata</taxon>
        <taxon>Craniata</taxon>
        <taxon>Vertebrata</taxon>
        <taxon>Euteleostomi</taxon>
        <taxon>Mammalia</taxon>
        <taxon>Eutheria</taxon>
        <taxon>Laurasiatheria</taxon>
        <taxon>Chiroptera</taxon>
        <taxon>Yangochiroptera</taxon>
        <taxon>Vespertilionidae</taxon>
        <taxon>Myotis</taxon>
    </lineage>
</organism>